<protein>
    <recommendedName>
        <fullName evidence="1">Imidazole glycerol phosphate synthase subunit HisH</fullName>
        <ecNumber evidence="1">4.3.2.10</ecNumber>
    </recommendedName>
    <alternativeName>
        <fullName evidence="1">IGP synthase glutaminase subunit</fullName>
        <ecNumber evidence="1">3.5.1.2</ecNumber>
    </alternativeName>
    <alternativeName>
        <fullName evidence="1">IGP synthase subunit HisH</fullName>
    </alternativeName>
    <alternativeName>
        <fullName evidence="1">ImGP synthase subunit HisH</fullName>
        <shortName evidence="1">IGPS subunit HisH</shortName>
    </alternativeName>
</protein>
<feature type="chain" id="PRO_0000231765" description="Imidazole glycerol phosphate synthase subunit HisH">
    <location>
        <begin position="1"/>
        <end position="211"/>
    </location>
</feature>
<feature type="domain" description="Glutamine amidotransferase type-1" evidence="1">
    <location>
        <begin position="4"/>
        <end position="211"/>
    </location>
</feature>
<feature type="active site" description="Nucleophile" evidence="1">
    <location>
        <position position="82"/>
    </location>
</feature>
<feature type="active site" evidence="1">
    <location>
        <position position="192"/>
    </location>
</feature>
<feature type="active site" evidence="1">
    <location>
        <position position="194"/>
    </location>
</feature>
<reference key="1">
    <citation type="journal article" date="2007" name="J. Bacteriol.">
        <title>Genome sequence and analysis of the soil cellulolytic actinomycete Thermobifida fusca YX.</title>
        <authorList>
            <person name="Lykidis A."/>
            <person name="Mavromatis K."/>
            <person name="Ivanova N."/>
            <person name="Anderson I."/>
            <person name="Land M."/>
            <person name="DiBartolo G."/>
            <person name="Martinez M."/>
            <person name="Lapidus A."/>
            <person name="Lucas S."/>
            <person name="Copeland A."/>
            <person name="Richardson P."/>
            <person name="Wilson D.B."/>
            <person name="Kyrpides N."/>
        </authorList>
    </citation>
    <scope>NUCLEOTIDE SEQUENCE [LARGE SCALE GENOMIC DNA]</scope>
    <source>
        <strain>YX</strain>
    </source>
</reference>
<dbReference type="EC" id="4.3.2.10" evidence="1"/>
<dbReference type="EC" id="3.5.1.2" evidence="1"/>
<dbReference type="EMBL" id="CP000088">
    <property type="protein sequence ID" value="AAZ55192.1"/>
    <property type="molecule type" value="Genomic_DNA"/>
</dbReference>
<dbReference type="RefSeq" id="WP_011291601.1">
    <property type="nucleotide sequence ID" value="NC_007333.1"/>
</dbReference>
<dbReference type="SMR" id="Q47QS5"/>
<dbReference type="STRING" id="269800.Tfu_1154"/>
<dbReference type="KEGG" id="tfu:Tfu_1154"/>
<dbReference type="eggNOG" id="COG0118">
    <property type="taxonomic scope" value="Bacteria"/>
</dbReference>
<dbReference type="HOGENOM" id="CLU_071837_1_0_11"/>
<dbReference type="OrthoDB" id="9807137at2"/>
<dbReference type="UniPathway" id="UPA00031">
    <property type="reaction ID" value="UER00010"/>
</dbReference>
<dbReference type="GO" id="GO:0005737">
    <property type="term" value="C:cytoplasm"/>
    <property type="evidence" value="ECO:0007669"/>
    <property type="project" value="UniProtKB-SubCell"/>
</dbReference>
<dbReference type="GO" id="GO:0004359">
    <property type="term" value="F:glutaminase activity"/>
    <property type="evidence" value="ECO:0007669"/>
    <property type="project" value="UniProtKB-EC"/>
</dbReference>
<dbReference type="GO" id="GO:0000107">
    <property type="term" value="F:imidazoleglycerol-phosphate synthase activity"/>
    <property type="evidence" value="ECO:0007669"/>
    <property type="project" value="UniProtKB-UniRule"/>
</dbReference>
<dbReference type="GO" id="GO:0016829">
    <property type="term" value="F:lyase activity"/>
    <property type="evidence" value="ECO:0007669"/>
    <property type="project" value="UniProtKB-KW"/>
</dbReference>
<dbReference type="GO" id="GO:0000105">
    <property type="term" value="P:L-histidine biosynthetic process"/>
    <property type="evidence" value="ECO:0007669"/>
    <property type="project" value="UniProtKB-UniRule"/>
</dbReference>
<dbReference type="CDD" id="cd01748">
    <property type="entry name" value="GATase1_IGP_Synthase"/>
    <property type="match status" value="1"/>
</dbReference>
<dbReference type="FunFam" id="3.40.50.880:FF:000056">
    <property type="entry name" value="Imidazole glycerol phosphate synthase subunit HisH"/>
    <property type="match status" value="1"/>
</dbReference>
<dbReference type="Gene3D" id="3.40.50.880">
    <property type="match status" value="1"/>
</dbReference>
<dbReference type="HAMAP" id="MF_00278">
    <property type="entry name" value="HisH"/>
    <property type="match status" value="1"/>
</dbReference>
<dbReference type="InterPro" id="IPR029062">
    <property type="entry name" value="Class_I_gatase-like"/>
</dbReference>
<dbReference type="InterPro" id="IPR017926">
    <property type="entry name" value="GATASE"/>
</dbReference>
<dbReference type="InterPro" id="IPR010139">
    <property type="entry name" value="Imidazole-glycPsynth_HisH"/>
</dbReference>
<dbReference type="NCBIfam" id="TIGR01855">
    <property type="entry name" value="IMP_synth_hisH"/>
    <property type="match status" value="1"/>
</dbReference>
<dbReference type="PANTHER" id="PTHR42701">
    <property type="entry name" value="IMIDAZOLE GLYCEROL PHOSPHATE SYNTHASE SUBUNIT HISH"/>
    <property type="match status" value="1"/>
</dbReference>
<dbReference type="PANTHER" id="PTHR42701:SF1">
    <property type="entry name" value="IMIDAZOLE GLYCEROL PHOSPHATE SYNTHASE SUBUNIT HISH"/>
    <property type="match status" value="1"/>
</dbReference>
<dbReference type="Pfam" id="PF00117">
    <property type="entry name" value="GATase"/>
    <property type="match status" value="1"/>
</dbReference>
<dbReference type="PIRSF" id="PIRSF000495">
    <property type="entry name" value="Amidotransf_hisH"/>
    <property type="match status" value="1"/>
</dbReference>
<dbReference type="SUPFAM" id="SSF52317">
    <property type="entry name" value="Class I glutamine amidotransferase-like"/>
    <property type="match status" value="1"/>
</dbReference>
<dbReference type="PROSITE" id="PS51273">
    <property type="entry name" value="GATASE_TYPE_1"/>
    <property type="match status" value="1"/>
</dbReference>
<accession>Q47QS5</accession>
<evidence type="ECO:0000255" key="1">
    <source>
        <dbReference type="HAMAP-Rule" id="MF_00278"/>
    </source>
</evidence>
<organism>
    <name type="scientific">Thermobifida fusca (strain YX)</name>
    <dbReference type="NCBI Taxonomy" id="269800"/>
    <lineage>
        <taxon>Bacteria</taxon>
        <taxon>Bacillati</taxon>
        <taxon>Actinomycetota</taxon>
        <taxon>Actinomycetes</taxon>
        <taxon>Streptosporangiales</taxon>
        <taxon>Nocardiopsidaceae</taxon>
        <taxon>Thermobifida</taxon>
    </lineage>
</organism>
<proteinExistence type="inferred from homology"/>
<sequence length="211" mass="22624">MQPRVVILDYGSGNLRSAQRAVARVGAHATISSDPHTALEADGLVVPGVGAFAACMRGLRALRGDRVIGKRLAGGRPVLGICVGMQILFERGVENDVVTEGCAEWPGTVERLDAPVIPHMGWNTVDAPAESAMFAGIDKDTRFYFVHSYGVRTWEMQTTSPHLKPPLVTWSTHGTPFVAAVENGPLWATQFHPEKSGDAGAQLLANWVATL</sequence>
<comment type="function">
    <text evidence="1">IGPS catalyzes the conversion of PRFAR and glutamine to IGP, AICAR and glutamate. The HisH subunit catalyzes the hydrolysis of glutamine to glutamate and ammonia as part of the synthesis of IGP and AICAR. The resulting ammonia molecule is channeled to the active site of HisF.</text>
</comment>
<comment type="catalytic activity">
    <reaction evidence="1">
        <text>5-[(5-phospho-1-deoxy-D-ribulos-1-ylimino)methylamino]-1-(5-phospho-beta-D-ribosyl)imidazole-4-carboxamide + L-glutamine = D-erythro-1-(imidazol-4-yl)glycerol 3-phosphate + 5-amino-1-(5-phospho-beta-D-ribosyl)imidazole-4-carboxamide + L-glutamate + H(+)</text>
        <dbReference type="Rhea" id="RHEA:24793"/>
        <dbReference type="ChEBI" id="CHEBI:15378"/>
        <dbReference type="ChEBI" id="CHEBI:29985"/>
        <dbReference type="ChEBI" id="CHEBI:58278"/>
        <dbReference type="ChEBI" id="CHEBI:58359"/>
        <dbReference type="ChEBI" id="CHEBI:58475"/>
        <dbReference type="ChEBI" id="CHEBI:58525"/>
        <dbReference type="EC" id="4.3.2.10"/>
    </reaction>
</comment>
<comment type="catalytic activity">
    <reaction evidence="1">
        <text>L-glutamine + H2O = L-glutamate + NH4(+)</text>
        <dbReference type="Rhea" id="RHEA:15889"/>
        <dbReference type="ChEBI" id="CHEBI:15377"/>
        <dbReference type="ChEBI" id="CHEBI:28938"/>
        <dbReference type="ChEBI" id="CHEBI:29985"/>
        <dbReference type="ChEBI" id="CHEBI:58359"/>
        <dbReference type="EC" id="3.5.1.2"/>
    </reaction>
</comment>
<comment type="pathway">
    <text evidence="1">Amino-acid biosynthesis; L-histidine biosynthesis; L-histidine from 5-phospho-alpha-D-ribose 1-diphosphate: step 5/9.</text>
</comment>
<comment type="subunit">
    <text evidence="1">Heterodimer of HisH and HisF.</text>
</comment>
<comment type="subcellular location">
    <subcellularLocation>
        <location evidence="1">Cytoplasm</location>
    </subcellularLocation>
</comment>
<gene>
    <name evidence="1" type="primary">hisH</name>
    <name type="ordered locus">Tfu_1154</name>
</gene>
<keyword id="KW-0028">Amino-acid biosynthesis</keyword>
<keyword id="KW-0963">Cytoplasm</keyword>
<keyword id="KW-0315">Glutamine amidotransferase</keyword>
<keyword id="KW-0368">Histidine biosynthesis</keyword>
<keyword id="KW-0378">Hydrolase</keyword>
<keyword id="KW-0456">Lyase</keyword>
<name>HIS5_THEFY</name>